<organism>
    <name type="scientific">Chlamydomonas reinhardtii</name>
    <name type="common">Chlamydomonas smithii</name>
    <dbReference type="NCBI Taxonomy" id="3055"/>
    <lineage>
        <taxon>Eukaryota</taxon>
        <taxon>Viridiplantae</taxon>
        <taxon>Chlorophyta</taxon>
        <taxon>core chlorophytes</taxon>
        <taxon>Chlorophyceae</taxon>
        <taxon>CS clade</taxon>
        <taxon>Chlamydomonadales</taxon>
        <taxon>Chlamydomonadaceae</taxon>
        <taxon>Chlamydomonas</taxon>
    </lineage>
</organism>
<sequence length="370" mass="37749">MARGPGDTDMDEASADAAIPSSTPNPTVAFRCTHALSGHTKAVAAVKFSPDGSLLASGSADRTVALWDAATGARVNTLAGHSCGVSDVAWNPNGRYLATAADDHSLKLWDAETGACLRTLTGHTNYVFCCNFDGAAGHLLASGSFDETLRLWDVRSGRCLREVPAHSDPVTSAAFSYDGSMVVTSSLDGLIRLWDTQTGHCLKTLFDRDSPPVSFAAFTPNAKYVLCNTLDGRAKLWDYAAGRTRRTYAGGHVNTQFCISSGFLGGSSSASFDLGCSMVVTGSEDGSLAAYDISTGHVVGRGAAAAAAAEGGGDEGSAAAAAAGGVAGGHTAAVLSVNVHPSAPLVATGGHHPDNSVRVWAASRTEPAAA</sequence>
<accession>Q8W1K8</accession>
<evidence type="ECO:0000256" key="1">
    <source>
        <dbReference type="SAM" id="MobiDB-lite"/>
    </source>
</evidence>
<evidence type="ECO:0000269" key="2">
    <source>
    </source>
</evidence>
<evidence type="ECO:0000269" key="3">
    <source>
    </source>
</evidence>
<evidence type="ECO:0000305" key="4"/>
<dbReference type="EMBL" id="AF443204">
    <property type="protein sequence ID" value="AAL60198.1"/>
    <property type="molecule type" value="mRNA"/>
</dbReference>
<dbReference type="RefSeq" id="XP_001696066.1">
    <property type="nucleotide sequence ID" value="XM_001696014.1"/>
</dbReference>
<dbReference type="SMR" id="Q8W1K8"/>
<dbReference type="BioGRID" id="981498">
    <property type="interactions" value="11"/>
</dbReference>
<dbReference type="PaxDb" id="3055-EDP01015"/>
<dbReference type="EnsemblPlants" id="PNW79810">
    <property type="protein sequence ID" value="PNW79810"/>
    <property type="gene ID" value="CHLRE_08g367650v5"/>
</dbReference>
<dbReference type="Gramene" id="PNW79810">
    <property type="protein sequence ID" value="PNW79810"/>
    <property type="gene ID" value="CHLRE_08g367650v5"/>
</dbReference>
<dbReference type="KEGG" id="cre:CHLRE_08g367650v5"/>
<dbReference type="eggNOG" id="KOG0266">
    <property type="taxonomic scope" value="Eukaryota"/>
</dbReference>
<dbReference type="HOGENOM" id="CLU_000288_57_1_1"/>
<dbReference type="OMA" id="CKGHDTA"/>
<dbReference type="OrthoDB" id="674604at2759"/>
<dbReference type="GO" id="GO:0005634">
    <property type="term" value="C:nucleus"/>
    <property type="evidence" value="ECO:0007669"/>
    <property type="project" value="UniProtKB-SubCell"/>
</dbReference>
<dbReference type="GO" id="GO:1990234">
    <property type="term" value="C:transferase complex"/>
    <property type="evidence" value="ECO:0007669"/>
    <property type="project" value="UniProtKB-ARBA"/>
</dbReference>
<dbReference type="CDD" id="cd00200">
    <property type="entry name" value="WD40"/>
    <property type="match status" value="1"/>
</dbReference>
<dbReference type="FunFam" id="2.130.10.10:FF:000228">
    <property type="entry name" value="COMPASS-like H3K4 histone methylase component WDR5A"/>
    <property type="match status" value="1"/>
</dbReference>
<dbReference type="Gene3D" id="2.130.10.10">
    <property type="entry name" value="YVTN repeat-like/Quinoprotein amine dehydrogenase"/>
    <property type="match status" value="2"/>
</dbReference>
<dbReference type="InterPro" id="IPR020472">
    <property type="entry name" value="G-protein_beta_WD-40_rep"/>
</dbReference>
<dbReference type="InterPro" id="IPR015943">
    <property type="entry name" value="WD40/YVTN_repeat-like_dom_sf"/>
</dbReference>
<dbReference type="InterPro" id="IPR019775">
    <property type="entry name" value="WD40_repeat_CS"/>
</dbReference>
<dbReference type="InterPro" id="IPR036322">
    <property type="entry name" value="WD40_repeat_dom_sf"/>
</dbReference>
<dbReference type="InterPro" id="IPR001680">
    <property type="entry name" value="WD40_rpt"/>
</dbReference>
<dbReference type="PANTHER" id="PTHR22847:SF637">
    <property type="entry name" value="WD REPEAT DOMAIN 5B"/>
    <property type="match status" value="1"/>
</dbReference>
<dbReference type="PANTHER" id="PTHR22847">
    <property type="entry name" value="WD40 REPEAT PROTEIN"/>
    <property type="match status" value="1"/>
</dbReference>
<dbReference type="Pfam" id="PF25175">
    <property type="entry name" value="Beta-prop_WDR5"/>
    <property type="match status" value="1"/>
</dbReference>
<dbReference type="Pfam" id="PF00400">
    <property type="entry name" value="WD40"/>
    <property type="match status" value="1"/>
</dbReference>
<dbReference type="PRINTS" id="PR00320">
    <property type="entry name" value="GPROTEINBRPT"/>
</dbReference>
<dbReference type="SMART" id="SM00320">
    <property type="entry name" value="WD40"/>
    <property type="match status" value="7"/>
</dbReference>
<dbReference type="SUPFAM" id="SSF50978">
    <property type="entry name" value="WD40 repeat-like"/>
    <property type="match status" value="1"/>
</dbReference>
<dbReference type="PROSITE" id="PS00678">
    <property type="entry name" value="WD_REPEATS_1"/>
    <property type="match status" value="4"/>
</dbReference>
<dbReference type="PROSITE" id="PS50082">
    <property type="entry name" value="WD_REPEATS_2"/>
    <property type="match status" value="5"/>
</dbReference>
<dbReference type="PROSITE" id="PS50294">
    <property type="entry name" value="WD_REPEATS_REGION"/>
    <property type="match status" value="1"/>
</dbReference>
<comment type="function">
    <text evidence="3">Part of a complex involved in 'Lys-4' histone H3 methylation.</text>
</comment>
<comment type="subcellular location">
    <subcellularLocation>
        <location evidence="2">Nucleus</location>
    </subcellularLocation>
</comment>
<comment type="disruption phenotype">
    <text evidence="3">Loss of monomethylated, an increase of dimethylated and a decrease of trimethylated 'Lys-4' histone H3, and defects in epigenetic silencing.</text>
</comment>
<comment type="similarity">
    <text evidence="4">Belongs to the WD repeat WDR5/wds family.</text>
</comment>
<proteinExistence type="evidence at transcript level"/>
<protein>
    <recommendedName>
        <fullName>Protein Mut11</fullName>
    </recommendedName>
    <alternativeName>
        <fullName>Mut11p</fullName>
    </alternativeName>
</protein>
<keyword id="KW-0539">Nucleus</keyword>
<keyword id="KW-0677">Repeat</keyword>
<keyword id="KW-0853">WD repeat</keyword>
<feature type="chain" id="PRO_0000278190" description="Protein Mut11">
    <location>
        <begin position="1"/>
        <end position="370"/>
    </location>
</feature>
<feature type="repeat" description="WD 1">
    <location>
        <begin position="38"/>
        <end position="77"/>
    </location>
</feature>
<feature type="repeat" description="WD 2">
    <location>
        <begin position="80"/>
        <end position="119"/>
    </location>
</feature>
<feature type="repeat" description="WD 3">
    <location>
        <begin position="122"/>
        <end position="162"/>
    </location>
</feature>
<feature type="repeat" description="WD 4">
    <location>
        <begin position="165"/>
        <end position="204"/>
    </location>
</feature>
<feature type="repeat" description="WD 5">
    <location>
        <begin position="208"/>
        <end position="247"/>
    </location>
</feature>
<feature type="repeat" description="WD 6">
    <location>
        <begin position="262"/>
        <end position="301"/>
    </location>
</feature>
<feature type="repeat" description="WD 7">
    <location>
        <begin position="329"/>
        <end position="370"/>
    </location>
</feature>
<feature type="region of interest" description="Disordered" evidence="1">
    <location>
        <begin position="1"/>
        <end position="22"/>
    </location>
</feature>
<reference key="1">
    <citation type="journal article" date="2002" name="Proc. Natl. Acad. Sci. U.S.A.">
        <title>Suppressors of transcriptional transgenic silencing in Chlamydomonas are sensitive to DNA-damaging agents and reactivate transposable elements.</title>
        <authorList>
            <person name="Jeong B.-R."/>
            <person name="Wu-Scharf D."/>
            <person name="Zhang C."/>
            <person name="Cerutti H."/>
        </authorList>
    </citation>
    <scope>NUCLEOTIDE SEQUENCE [MRNA]</scope>
</reference>
<reference key="2">
    <citation type="journal article" date="2002" name="Plant J.">
        <title>A WD40-repeat containing protein, similar to a fungal co-repressor, is required for transcriptional gene silencing in Chlamydomonas.</title>
        <authorList>
            <person name="Zhang C."/>
            <person name="Wu-Scharf D."/>
            <person name="Jeong B.-R."/>
            <person name="Cerutti H."/>
        </authorList>
    </citation>
    <scope>NUCLEOTIDE SEQUENCE [GENOMIC DNA]</scope>
    <scope>SUBCELLULAR LOCATION</scope>
</reference>
<reference key="3">
    <citation type="journal article" date="2005" name="Plant Cell">
        <title>Monomethyl histone H3 lysine 4 as an epigenetic mark for silenced euchromatin in Chlamydomonas.</title>
        <authorList>
            <person name="van Dijk K."/>
            <person name="Marley K.E."/>
            <person name="Jeong B.-R."/>
            <person name="Xu J."/>
            <person name="Hesson J."/>
            <person name="Cerny R.L."/>
            <person name="Waterborg J.H."/>
            <person name="Cerutti H."/>
        </authorList>
    </citation>
    <scope>FUNCTION</scope>
    <scope>DISRUPTION PHENOTYPE</scope>
</reference>
<name>MUT11_CHLRE</name>
<gene>
    <name type="primary">Mut11</name>
</gene>